<proteinExistence type="inferred from homology"/>
<sequence>MAKEQQVQANDLQEKLIAVNRVSKTVKGGRIMSFTALTVVGDGNGRVGFGYGKAREVPAAIQKAMEKARRNMTTIALNEGTLHHPVKGRHSGSKVYMQPAAEGTGVIAGGAMRAVLEVAGVHNVLSKAYGSTNPINIVRATIDALGSMKSPEMVAAKRGLTVEAISE</sequence>
<reference key="1">
    <citation type="journal article" date="2003" name="Lancet">
        <title>Genome sequence of Vibrio parahaemolyticus: a pathogenic mechanism distinct from that of V. cholerae.</title>
        <authorList>
            <person name="Makino K."/>
            <person name="Oshima K."/>
            <person name="Kurokawa K."/>
            <person name="Yokoyama K."/>
            <person name="Uda T."/>
            <person name="Tagomori K."/>
            <person name="Iijima Y."/>
            <person name="Najima M."/>
            <person name="Nakano M."/>
            <person name="Yamashita A."/>
            <person name="Kubota Y."/>
            <person name="Kimura S."/>
            <person name="Yasunaga T."/>
            <person name="Honda T."/>
            <person name="Shinagawa H."/>
            <person name="Hattori M."/>
            <person name="Iida T."/>
        </authorList>
    </citation>
    <scope>NUCLEOTIDE SEQUENCE [LARGE SCALE GENOMIC DNA]</scope>
    <source>
        <strain>RIMD 2210633</strain>
    </source>
</reference>
<organism>
    <name type="scientific">Vibrio parahaemolyticus serotype O3:K6 (strain RIMD 2210633)</name>
    <dbReference type="NCBI Taxonomy" id="223926"/>
    <lineage>
        <taxon>Bacteria</taxon>
        <taxon>Pseudomonadati</taxon>
        <taxon>Pseudomonadota</taxon>
        <taxon>Gammaproteobacteria</taxon>
        <taxon>Vibrionales</taxon>
        <taxon>Vibrionaceae</taxon>
        <taxon>Vibrio</taxon>
    </lineage>
</organism>
<gene>
    <name evidence="1" type="primary">rpsE</name>
    <name type="ordered locus">VP0274</name>
</gene>
<dbReference type="EMBL" id="BA000031">
    <property type="protein sequence ID" value="BAC58537.1"/>
    <property type="molecule type" value="Genomic_DNA"/>
</dbReference>
<dbReference type="RefSeq" id="NP_796653.1">
    <property type="nucleotide sequence ID" value="NC_004603.1"/>
</dbReference>
<dbReference type="RefSeq" id="WP_005435090.1">
    <property type="nucleotide sequence ID" value="NC_004603.1"/>
</dbReference>
<dbReference type="SMR" id="Q87SZ6"/>
<dbReference type="GeneID" id="83583106"/>
<dbReference type="KEGG" id="vpa:VP0274"/>
<dbReference type="PATRIC" id="fig|223926.6.peg.265"/>
<dbReference type="eggNOG" id="COG0098">
    <property type="taxonomic scope" value="Bacteria"/>
</dbReference>
<dbReference type="HOGENOM" id="CLU_065898_2_2_6"/>
<dbReference type="PRO" id="PR:Q87SZ6"/>
<dbReference type="Proteomes" id="UP000002493">
    <property type="component" value="Chromosome 1"/>
</dbReference>
<dbReference type="GO" id="GO:0015935">
    <property type="term" value="C:small ribosomal subunit"/>
    <property type="evidence" value="ECO:0007669"/>
    <property type="project" value="InterPro"/>
</dbReference>
<dbReference type="GO" id="GO:0019843">
    <property type="term" value="F:rRNA binding"/>
    <property type="evidence" value="ECO:0007669"/>
    <property type="project" value="UniProtKB-UniRule"/>
</dbReference>
<dbReference type="GO" id="GO:0003735">
    <property type="term" value="F:structural constituent of ribosome"/>
    <property type="evidence" value="ECO:0007669"/>
    <property type="project" value="InterPro"/>
</dbReference>
<dbReference type="GO" id="GO:0006412">
    <property type="term" value="P:translation"/>
    <property type="evidence" value="ECO:0007669"/>
    <property type="project" value="UniProtKB-UniRule"/>
</dbReference>
<dbReference type="FunFam" id="3.30.160.20:FF:000001">
    <property type="entry name" value="30S ribosomal protein S5"/>
    <property type="match status" value="1"/>
</dbReference>
<dbReference type="FunFam" id="3.30.230.10:FF:000002">
    <property type="entry name" value="30S ribosomal protein S5"/>
    <property type="match status" value="1"/>
</dbReference>
<dbReference type="Gene3D" id="3.30.160.20">
    <property type="match status" value="1"/>
</dbReference>
<dbReference type="Gene3D" id="3.30.230.10">
    <property type="match status" value="1"/>
</dbReference>
<dbReference type="HAMAP" id="MF_01307_B">
    <property type="entry name" value="Ribosomal_uS5_B"/>
    <property type="match status" value="1"/>
</dbReference>
<dbReference type="InterPro" id="IPR020568">
    <property type="entry name" value="Ribosomal_Su5_D2-typ_SF"/>
</dbReference>
<dbReference type="InterPro" id="IPR000851">
    <property type="entry name" value="Ribosomal_uS5"/>
</dbReference>
<dbReference type="InterPro" id="IPR005712">
    <property type="entry name" value="Ribosomal_uS5_bac-type"/>
</dbReference>
<dbReference type="InterPro" id="IPR005324">
    <property type="entry name" value="Ribosomal_uS5_C"/>
</dbReference>
<dbReference type="InterPro" id="IPR013810">
    <property type="entry name" value="Ribosomal_uS5_N"/>
</dbReference>
<dbReference type="InterPro" id="IPR018192">
    <property type="entry name" value="Ribosomal_uS5_N_CS"/>
</dbReference>
<dbReference type="InterPro" id="IPR014721">
    <property type="entry name" value="Ribsml_uS5_D2-typ_fold_subgr"/>
</dbReference>
<dbReference type="NCBIfam" id="TIGR01021">
    <property type="entry name" value="rpsE_bact"/>
    <property type="match status" value="1"/>
</dbReference>
<dbReference type="PANTHER" id="PTHR48277">
    <property type="entry name" value="MITOCHONDRIAL RIBOSOMAL PROTEIN S5"/>
    <property type="match status" value="1"/>
</dbReference>
<dbReference type="PANTHER" id="PTHR48277:SF1">
    <property type="entry name" value="MITOCHONDRIAL RIBOSOMAL PROTEIN S5"/>
    <property type="match status" value="1"/>
</dbReference>
<dbReference type="Pfam" id="PF00333">
    <property type="entry name" value="Ribosomal_S5"/>
    <property type="match status" value="1"/>
</dbReference>
<dbReference type="Pfam" id="PF03719">
    <property type="entry name" value="Ribosomal_S5_C"/>
    <property type="match status" value="1"/>
</dbReference>
<dbReference type="SUPFAM" id="SSF54768">
    <property type="entry name" value="dsRNA-binding domain-like"/>
    <property type="match status" value="1"/>
</dbReference>
<dbReference type="SUPFAM" id="SSF54211">
    <property type="entry name" value="Ribosomal protein S5 domain 2-like"/>
    <property type="match status" value="1"/>
</dbReference>
<dbReference type="PROSITE" id="PS00585">
    <property type="entry name" value="RIBOSOMAL_S5"/>
    <property type="match status" value="1"/>
</dbReference>
<dbReference type="PROSITE" id="PS50881">
    <property type="entry name" value="S5_DSRBD"/>
    <property type="match status" value="1"/>
</dbReference>
<keyword id="KW-0687">Ribonucleoprotein</keyword>
<keyword id="KW-0689">Ribosomal protein</keyword>
<keyword id="KW-0694">RNA-binding</keyword>
<keyword id="KW-0699">rRNA-binding</keyword>
<comment type="function">
    <text evidence="1">With S4 and S12 plays an important role in translational accuracy.</text>
</comment>
<comment type="function">
    <text evidence="1">Located at the back of the 30S subunit body where it stabilizes the conformation of the head with respect to the body.</text>
</comment>
<comment type="subunit">
    <text evidence="1">Part of the 30S ribosomal subunit. Contacts proteins S4 and S8.</text>
</comment>
<comment type="domain">
    <text>The N-terminal domain interacts with the head of the 30S subunit; the C-terminal domain interacts with the body and contacts protein S4. The interaction surface between S4 and S5 is involved in control of translational fidelity.</text>
</comment>
<comment type="similarity">
    <text evidence="1">Belongs to the universal ribosomal protein uS5 family.</text>
</comment>
<protein>
    <recommendedName>
        <fullName evidence="1">Small ribosomal subunit protein uS5</fullName>
    </recommendedName>
    <alternativeName>
        <fullName evidence="2">30S ribosomal protein S5</fullName>
    </alternativeName>
</protein>
<accession>Q87SZ6</accession>
<evidence type="ECO:0000255" key="1">
    <source>
        <dbReference type="HAMAP-Rule" id="MF_01307"/>
    </source>
</evidence>
<evidence type="ECO:0000305" key="2"/>
<name>RS5_VIBPA</name>
<feature type="chain" id="PRO_0000131629" description="Small ribosomal subunit protein uS5">
    <location>
        <begin position="1"/>
        <end position="167"/>
    </location>
</feature>
<feature type="domain" description="S5 DRBM" evidence="1">
    <location>
        <begin position="12"/>
        <end position="75"/>
    </location>
</feature>